<keyword id="KW-0489">Methyltransferase</keyword>
<keyword id="KW-0694">RNA-binding</keyword>
<keyword id="KW-0949">S-adenosyl-L-methionine</keyword>
<keyword id="KW-0808">Transferase</keyword>
<keyword id="KW-0819">tRNA processing</keyword>
<keyword id="KW-0820">tRNA-binding</keyword>
<sequence>MKIISEGETKLMVPEESTLSKKDTVFYNPVMETNRDISVSVVQSFLDDFKRDEFLMCDPLGGSGARGIRYAKELKFNGDLKVSIGDINPSAVKMIKENLKLNELENVEVFHEDANVLLSKNFKVFNVVDLDPFGSPVPYLDSGIRASLTKGGLLCMTATDTAVLCGAYRKTCIRKYNAVPLKGDKELAVRLMIGYAVKMASKYDIGLKPIFSHVTDHYARTFMVTERGAGKADSAIENLGYIRQDSEQKSFKTFEEGSEKGYAGPFYLGEISDKNIVQNALNTAKTRNYSKRAVNILEMISRESEINQVGCFDIHELCSFIKKLVPPVNDIMENLKENGFKVTRVHYNPYGLKTDAELSDLVVLISEYHSKKY</sequence>
<dbReference type="EC" id="2.1.1.216" evidence="1"/>
<dbReference type="EMBL" id="AF298223">
    <property type="protein sequence ID" value="AAG37224.1"/>
    <property type="molecule type" value="Genomic_DNA"/>
</dbReference>
<dbReference type="SMR" id="P0CW64"/>
<dbReference type="GO" id="GO:0160104">
    <property type="term" value="F:tRNA (guanine(26)-N2)-dimethyltransferase activity"/>
    <property type="evidence" value="ECO:0007669"/>
    <property type="project" value="UniProtKB-UniRule"/>
</dbReference>
<dbReference type="GO" id="GO:0000049">
    <property type="term" value="F:tRNA binding"/>
    <property type="evidence" value="ECO:0007669"/>
    <property type="project" value="UniProtKB-KW"/>
</dbReference>
<dbReference type="GO" id="GO:0002940">
    <property type="term" value="P:tRNA N2-guanine methylation"/>
    <property type="evidence" value="ECO:0007669"/>
    <property type="project" value="TreeGrafter"/>
</dbReference>
<dbReference type="CDD" id="cd02440">
    <property type="entry name" value="AdoMet_MTases"/>
    <property type="match status" value="1"/>
</dbReference>
<dbReference type="FunFam" id="3.40.50.150:FF:000272">
    <property type="entry name" value="tRNA (guanine(26)-N(2))-dimethyltransferase"/>
    <property type="match status" value="1"/>
</dbReference>
<dbReference type="Gene3D" id="3.30.56.70">
    <property type="entry name" value="N2,N2-dimethylguanosine tRNA methyltransferase, C-terminal domain"/>
    <property type="match status" value="1"/>
</dbReference>
<dbReference type="Gene3D" id="3.40.50.150">
    <property type="entry name" value="Vaccinia Virus protein VP39"/>
    <property type="match status" value="1"/>
</dbReference>
<dbReference type="HAMAP" id="MF_00290">
    <property type="entry name" value="tRNA_dimethyltr_TRM1"/>
    <property type="match status" value="1"/>
</dbReference>
<dbReference type="InterPro" id="IPR029063">
    <property type="entry name" value="SAM-dependent_MTases_sf"/>
</dbReference>
<dbReference type="InterPro" id="IPR002905">
    <property type="entry name" value="Trm1"/>
</dbReference>
<dbReference type="InterPro" id="IPR022923">
    <property type="entry name" value="TRM1_arc_bac"/>
</dbReference>
<dbReference type="InterPro" id="IPR042296">
    <property type="entry name" value="tRNA_met_Trm1_C"/>
</dbReference>
<dbReference type="NCBIfam" id="TIGR00308">
    <property type="entry name" value="TRM1"/>
    <property type="match status" value="1"/>
</dbReference>
<dbReference type="PANTHER" id="PTHR10631">
    <property type="entry name" value="N 2 ,N 2 -DIMETHYLGUANOSINE TRNA METHYLTRANSFERASE"/>
    <property type="match status" value="1"/>
</dbReference>
<dbReference type="PANTHER" id="PTHR10631:SF3">
    <property type="entry name" value="TRNA (GUANINE(26)-N(2))-DIMETHYLTRANSFERASE"/>
    <property type="match status" value="1"/>
</dbReference>
<dbReference type="Pfam" id="PF02005">
    <property type="entry name" value="TRM"/>
    <property type="match status" value="1"/>
</dbReference>
<dbReference type="SUPFAM" id="SSF53335">
    <property type="entry name" value="S-adenosyl-L-methionine-dependent methyltransferases"/>
    <property type="match status" value="1"/>
</dbReference>
<dbReference type="PROSITE" id="PS51626">
    <property type="entry name" value="SAM_MT_TRM1"/>
    <property type="match status" value="1"/>
</dbReference>
<name>TRM1_METMI</name>
<accession>P0CW64</accession>
<accession>Q9HH73</accession>
<organism>
    <name type="scientific">Methanococcus maripaludis</name>
    <name type="common">Methanococcus deltae</name>
    <dbReference type="NCBI Taxonomy" id="39152"/>
    <lineage>
        <taxon>Archaea</taxon>
        <taxon>Methanobacteriati</taxon>
        <taxon>Methanobacteriota</taxon>
        <taxon>Methanomada group</taxon>
        <taxon>Methanococci</taxon>
        <taxon>Methanococcales</taxon>
        <taxon>Methanococcaceae</taxon>
        <taxon>Methanococcus</taxon>
    </lineage>
</organism>
<reference key="1">
    <citation type="submission" date="2000-08" db="EMBL/GenBank/DDBJ databases">
        <title>Genetic characterization of trmI in Methanococcus maripaludis JJ.</title>
        <authorList>
            <person name="Graham D.E."/>
            <person name="Yu J.P."/>
            <person name="Whitman W.B."/>
            <person name="Olsen G.J."/>
        </authorList>
    </citation>
    <scope>NUCLEOTIDE SEQUENCE [GENOMIC DNA]</scope>
    <source>
        <strain>ATCC 43000 / DSM 2067 / JCM 10722 / JJ</strain>
    </source>
</reference>
<proteinExistence type="inferred from homology"/>
<feature type="chain" id="PRO_0000147685" description="tRNA (guanine(26)-N(2))-dimethyltransferase">
    <location>
        <begin position="1"/>
        <end position="373"/>
    </location>
</feature>
<feature type="domain" description="Trm1 methyltransferase" evidence="1">
    <location>
        <begin position="2"/>
        <end position="365"/>
    </location>
</feature>
<feature type="binding site" evidence="1">
    <location>
        <position position="35"/>
    </location>
    <ligand>
        <name>S-adenosyl-L-methionine</name>
        <dbReference type="ChEBI" id="CHEBI:59789"/>
    </ligand>
</feature>
<feature type="binding site" evidence="1">
    <location>
        <position position="66"/>
    </location>
    <ligand>
        <name>S-adenosyl-L-methionine</name>
        <dbReference type="ChEBI" id="CHEBI:59789"/>
    </ligand>
</feature>
<feature type="binding site" evidence="1">
    <location>
        <position position="86"/>
    </location>
    <ligand>
        <name>S-adenosyl-L-methionine</name>
        <dbReference type="ChEBI" id="CHEBI:59789"/>
    </ligand>
</feature>
<feature type="binding site" evidence="1">
    <location>
        <position position="113"/>
    </location>
    <ligand>
        <name>S-adenosyl-L-methionine</name>
        <dbReference type="ChEBI" id="CHEBI:59789"/>
    </ligand>
</feature>
<feature type="binding site" evidence="1">
    <location>
        <position position="114"/>
    </location>
    <ligand>
        <name>S-adenosyl-L-methionine</name>
        <dbReference type="ChEBI" id="CHEBI:59789"/>
    </ligand>
</feature>
<evidence type="ECO:0000255" key="1">
    <source>
        <dbReference type="HAMAP-Rule" id="MF_00290"/>
    </source>
</evidence>
<protein>
    <recommendedName>
        <fullName evidence="1">tRNA (guanine(26)-N(2))-dimethyltransferase</fullName>
        <ecNumber evidence="1">2.1.1.216</ecNumber>
    </recommendedName>
    <alternativeName>
        <fullName evidence="1">tRNA 2,2-dimethylguanosine-26 methyltransferase</fullName>
    </alternativeName>
    <alternativeName>
        <fullName evidence="1">tRNA(guanine-26,N(2)-N(2)) methyltransferase</fullName>
    </alternativeName>
    <alternativeName>
        <fullName evidence="1">tRNA(m(2,2)G26)dimethyltransferase</fullName>
    </alternativeName>
</protein>
<comment type="function">
    <text evidence="1">Dimethylates a single guanine residue at position 26 of a number of tRNAs using S-adenosyl-L-methionine as donor of the methyl groups.</text>
</comment>
<comment type="catalytic activity">
    <reaction evidence="1">
        <text>guanosine(26) in tRNA + 2 S-adenosyl-L-methionine = N(2)-dimethylguanosine(26) in tRNA + 2 S-adenosyl-L-homocysteine + 2 H(+)</text>
        <dbReference type="Rhea" id="RHEA:43140"/>
        <dbReference type="Rhea" id="RHEA-COMP:10359"/>
        <dbReference type="Rhea" id="RHEA-COMP:10360"/>
        <dbReference type="ChEBI" id="CHEBI:15378"/>
        <dbReference type="ChEBI" id="CHEBI:57856"/>
        <dbReference type="ChEBI" id="CHEBI:59789"/>
        <dbReference type="ChEBI" id="CHEBI:74269"/>
        <dbReference type="ChEBI" id="CHEBI:74513"/>
        <dbReference type="EC" id="2.1.1.216"/>
    </reaction>
</comment>
<comment type="similarity">
    <text evidence="1">Belongs to the class I-like SAM-binding methyltransferase superfamily. Trm1 family.</text>
</comment>
<gene>
    <name evidence="1" type="primary">trm1</name>
    <name type="synonym">trmI</name>
</gene>